<gene>
    <name evidence="1" type="primary">surE</name>
    <name type="ordered locus">Rpal_3182</name>
</gene>
<accession>B3Q6H7</accession>
<evidence type="ECO:0000255" key="1">
    <source>
        <dbReference type="HAMAP-Rule" id="MF_00060"/>
    </source>
</evidence>
<keyword id="KW-0963">Cytoplasm</keyword>
<keyword id="KW-0378">Hydrolase</keyword>
<keyword id="KW-0479">Metal-binding</keyword>
<keyword id="KW-0547">Nucleotide-binding</keyword>
<sequence>MRILCTNDDGIHAPGLKTVEQIARAISDDVWVVAPELDQSGVSHSLSLNDPLRLREVGPRHFAVRGTPTDCVIMGSRFILKDKAPDLVLSGVNRGRNVAEDVVYSGTIAGALEGTILGLPSFALSQEFTIETRNAPLWETARTHAPDIIRKVMAAGVPKNTVVNINFPACTPDKVKGVVVTRQGKRNPGFLRIDERHDGRGNPYYWIGFERIKVEDMPAEGTDLAALAANFVSVTPLKLDRTDETFSAALANTLA</sequence>
<dbReference type="EC" id="3.1.3.5" evidence="1"/>
<dbReference type="EMBL" id="CP001096">
    <property type="protein sequence ID" value="ACF01686.1"/>
    <property type="molecule type" value="Genomic_DNA"/>
</dbReference>
<dbReference type="RefSeq" id="WP_011158392.1">
    <property type="nucleotide sequence ID" value="NC_011004.1"/>
</dbReference>
<dbReference type="SMR" id="B3Q6H7"/>
<dbReference type="GeneID" id="66893919"/>
<dbReference type="KEGG" id="rpt:Rpal_3182"/>
<dbReference type="HOGENOM" id="CLU_045192_1_2_5"/>
<dbReference type="OrthoDB" id="9780815at2"/>
<dbReference type="Proteomes" id="UP000001725">
    <property type="component" value="Chromosome"/>
</dbReference>
<dbReference type="GO" id="GO:0005737">
    <property type="term" value="C:cytoplasm"/>
    <property type="evidence" value="ECO:0007669"/>
    <property type="project" value="UniProtKB-SubCell"/>
</dbReference>
<dbReference type="GO" id="GO:0008254">
    <property type="term" value="F:3'-nucleotidase activity"/>
    <property type="evidence" value="ECO:0007669"/>
    <property type="project" value="TreeGrafter"/>
</dbReference>
<dbReference type="GO" id="GO:0008253">
    <property type="term" value="F:5'-nucleotidase activity"/>
    <property type="evidence" value="ECO:0007669"/>
    <property type="project" value="UniProtKB-UniRule"/>
</dbReference>
<dbReference type="GO" id="GO:0004309">
    <property type="term" value="F:exopolyphosphatase activity"/>
    <property type="evidence" value="ECO:0007669"/>
    <property type="project" value="TreeGrafter"/>
</dbReference>
<dbReference type="GO" id="GO:0046872">
    <property type="term" value="F:metal ion binding"/>
    <property type="evidence" value="ECO:0007669"/>
    <property type="project" value="UniProtKB-UniRule"/>
</dbReference>
<dbReference type="GO" id="GO:0000166">
    <property type="term" value="F:nucleotide binding"/>
    <property type="evidence" value="ECO:0007669"/>
    <property type="project" value="UniProtKB-KW"/>
</dbReference>
<dbReference type="FunFam" id="3.40.1210.10:FF:000001">
    <property type="entry name" value="5'/3'-nucleotidase SurE"/>
    <property type="match status" value="1"/>
</dbReference>
<dbReference type="Gene3D" id="3.40.1210.10">
    <property type="entry name" value="Survival protein SurE-like phosphatase/nucleotidase"/>
    <property type="match status" value="1"/>
</dbReference>
<dbReference type="HAMAP" id="MF_00060">
    <property type="entry name" value="SurE"/>
    <property type="match status" value="1"/>
</dbReference>
<dbReference type="InterPro" id="IPR030048">
    <property type="entry name" value="SurE"/>
</dbReference>
<dbReference type="InterPro" id="IPR002828">
    <property type="entry name" value="SurE-like_Pase/nucleotidase"/>
</dbReference>
<dbReference type="InterPro" id="IPR036523">
    <property type="entry name" value="SurE-like_sf"/>
</dbReference>
<dbReference type="NCBIfam" id="NF001490">
    <property type="entry name" value="PRK00346.1-4"/>
    <property type="match status" value="1"/>
</dbReference>
<dbReference type="NCBIfam" id="TIGR00087">
    <property type="entry name" value="surE"/>
    <property type="match status" value="1"/>
</dbReference>
<dbReference type="PANTHER" id="PTHR30457">
    <property type="entry name" value="5'-NUCLEOTIDASE SURE"/>
    <property type="match status" value="1"/>
</dbReference>
<dbReference type="PANTHER" id="PTHR30457:SF12">
    <property type="entry name" value="5'_3'-NUCLEOTIDASE SURE"/>
    <property type="match status" value="1"/>
</dbReference>
<dbReference type="Pfam" id="PF01975">
    <property type="entry name" value="SurE"/>
    <property type="match status" value="1"/>
</dbReference>
<dbReference type="SUPFAM" id="SSF64167">
    <property type="entry name" value="SurE-like"/>
    <property type="match status" value="1"/>
</dbReference>
<organism>
    <name type="scientific">Rhodopseudomonas palustris (strain TIE-1)</name>
    <dbReference type="NCBI Taxonomy" id="395960"/>
    <lineage>
        <taxon>Bacteria</taxon>
        <taxon>Pseudomonadati</taxon>
        <taxon>Pseudomonadota</taxon>
        <taxon>Alphaproteobacteria</taxon>
        <taxon>Hyphomicrobiales</taxon>
        <taxon>Nitrobacteraceae</taxon>
        <taxon>Rhodopseudomonas</taxon>
    </lineage>
</organism>
<comment type="function">
    <text evidence="1">Nucleotidase that shows phosphatase activity on nucleoside 5'-monophosphates.</text>
</comment>
<comment type="catalytic activity">
    <reaction evidence="1">
        <text>a ribonucleoside 5'-phosphate + H2O = a ribonucleoside + phosphate</text>
        <dbReference type="Rhea" id="RHEA:12484"/>
        <dbReference type="ChEBI" id="CHEBI:15377"/>
        <dbReference type="ChEBI" id="CHEBI:18254"/>
        <dbReference type="ChEBI" id="CHEBI:43474"/>
        <dbReference type="ChEBI" id="CHEBI:58043"/>
        <dbReference type="EC" id="3.1.3.5"/>
    </reaction>
</comment>
<comment type="cofactor">
    <cofactor evidence="1">
        <name>a divalent metal cation</name>
        <dbReference type="ChEBI" id="CHEBI:60240"/>
    </cofactor>
    <text evidence="1">Binds 1 divalent metal cation per subunit.</text>
</comment>
<comment type="subcellular location">
    <subcellularLocation>
        <location evidence="1">Cytoplasm</location>
    </subcellularLocation>
</comment>
<comment type="similarity">
    <text evidence="1">Belongs to the SurE nucleotidase family.</text>
</comment>
<feature type="chain" id="PRO_1000092031" description="5'-nucleotidase SurE">
    <location>
        <begin position="1"/>
        <end position="255"/>
    </location>
</feature>
<feature type="binding site" evidence="1">
    <location>
        <position position="8"/>
    </location>
    <ligand>
        <name>a divalent metal cation</name>
        <dbReference type="ChEBI" id="CHEBI:60240"/>
    </ligand>
</feature>
<feature type="binding site" evidence="1">
    <location>
        <position position="9"/>
    </location>
    <ligand>
        <name>a divalent metal cation</name>
        <dbReference type="ChEBI" id="CHEBI:60240"/>
    </ligand>
</feature>
<feature type="binding site" evidence="1">
    <location>
        <position position="40"/>
    </location>
    <ligand>
        <name>a divalent metal cation</name>
        <dbReference type="ChEBI" id="CHEBI:60240"/>
    </ligand>
</feature>
<feature type="binding site" evidence="1">
    <location>
        <position position="93"/>
    </location>
    <ligand>
        <name>a divalent metal cation</name>
        <dbReference type="ChEBI" id="CHEBI:60240"/>
    </ligand>
</feature>
<protein>
    <recommendedName>
        <fullName evidence="1">5'-nucleotidase SurE</fullName>
        <ecNumber evidence="1">3.1.3.5</ecNumber>
    </recommendedName>
    <alternativeName>
        <fullName evidence="1">Nucleoside 5'-monophosphate phosphohydrolase</fullName>
    </alternativeName>
</protein>
<proteinExistence type="inferred from homology"/>
<reference key="1">
    <citation type="submission" date="2008-05" db="EMBL/GenBank/DDBJ databases">
        <title>Complete sequence of Rhodopseudomonas palustris TIE-1.</title>
        <authorList>
            <consortium name="US DOE Joint Genome Institute"/>
            <person name="Lucas S."/>
            <person name="Copeland A."/>
            <person name="Lapidus A."/>
            <person name="Glavina del Rio T."/>
            <person name="Dalin E."/>
            <person name="Tice H."/>
            <person name="Pitluck S."/>
            <person name="Chain P."/>
            <person name="Malfatti S."/>
            <person name="Shin M."/>
            <person name="Vergez L."/>
            <person name="Lang D."/>
            <person name="Schmutz J."/>
            <person name="Larimer F."/>
            <person name="Land M."/>
            <person name="Hauser L."/>
            <person name="Kyrpides N."/>
            <person name="Mikhailova N."/>
            <person name="Emerson D."/>
            <person name="Newman D.K."/>
            <person name="Roden E."/>
            <person name="Richardson P."/>
        </authorList>
    </citation>
    <scope>NUCLEOTIDE SEQUENCE [LARGE SCALE GENOMIC DNA]</scope>
    <source>
        <strain>TIE-1</strain>
    </source>
</reference>
<name>SURE_RHOPT</name>